<dbReference type="EC" id="1.3.5.1"/>
<dbReference type="EMBL" id="AF007261">
    <property type="protein sequence ID" value="AAD11913.1"/>
    <property type="molecule type" value="Genomic_DNA"/>
</dbReference>
<dbReference type="PIR" id="S78180">
    <property type="entry name" value="S78180"/>
</dbReference>
<dbReference type="RefSeq" id="NP_044798.1">
    <property type="nucleotide sequence ID" value="NC_001823.1"/>
</dbReference>
<dbReference type="SMR" id="P80480"/>
<dbReference type="GeneID" id="801067"/>
<dbReference type="UniPathway" id="UPA00223">
    <property type="reaction ID" value="UER01006"/>
</dbReference>
<dbReference type="GO" id="GO:0005743">
    <property type="term" value="C:mitochondrial inner membrane"/>
    <property type="evidence" value="ECO:0007669"/>
    <property type="project" value="UniProtKB-SubCell"/>
</dbReference>
<dbReference type="GO" id="GO:0051537">
    <property type="term" value="F:2 iron, 2 sulfur cluster binding"/>
    <property type="evidence" value="ECO:0007669"/>
    <property type="project" value="UniProtKB-KW"/>
</dbReference>
<dbReference type="GO" id="GO:0051538">
    <property type="term" value="F:3 iron, 4 sulfur cluster binding"/>
    <property type="evidence" value="ECO:0007669"/>
    <property type="project" value="UniProtKB-KW"/>
</dbReference>
<dbReference type="GO" id="GO:0051539">
    <property type="term" value="F:4 iron, 4 sulfur cluster binding"/>
    <property type="evidence" value="ECO:0007669"/>
    <property type="project" value="UniProtKB-KW"/>
</dbReference>
<dbReference type="GO" id="GO:0009055">
    <property type="term" value="F:electron transfer activity"/>
    <property type="evidence" value="ECO:0007669"/>
    <property type="project" value="InterPro"/>
</dbReference>
<dbReference type="GO" id="GO:0046872">
    <property type="term" value="F:metal ion binding"/>
    <property type="evidence" value="ECO:0007669"/>
    <property type="project" value="UniProtKB-KW"/>
</dbReference>
<dbReference type="GO" id="GO:0008177">
    <property type="term" value="F:succinate dehydrogenase (quinone) activity"/>
    <property type="evidence" value="ECO:0007669"/>
    <property type="project" value="UniProtKB-EC"/>
</dbReference>
<dbReference type="GO" id="GO:0022904">
    <property type="term" value="P:respiratory electron transport chain"/>
    <property type="evidence" value="ECO:0007669"/>
    <property type="project" value="TreeGrafter"/>
</dbReference>
<dbReference type="GO" id="GO:0006099">
    <property type="term" value="P:tricarboxylic acid cycle"/>
    <property type="evidence" value="ECO:0007669"/>
    <property type="project" value="UniProtKB-UniPathway"/>
</dbReference>
<dbReference type="FunFam" id="3.10.20.30:FF:000007">
    <property type="entry name" value="Succinate dehydrogenase [ubiquinone] iron-sulfur subunit, mitochondrial"/>
    <property type="match status" value="1"/>
</dbReference>
<dbReference type="FunFam" id="1.10.1060.10:FF:000001">
    <property type="entry name" value="Succinate dehydrogenase iron-sulfur subunit SdhB"/>
    <property type="match status" value="1"/>
</dbReference>
<dbReference type="Gene3D" id="3.10.20.30">
    <property type="match status" value="1"/>
</dbReference>
<dbReference type="Gene3D" id="1.10.1060.10">
    <property type="entry name" value="Alpha-helical ferredoxin"/>
    <property type="match status" value="1"/>
</dbReference>
<dbReference type="InterPro" id="IPR036010">
    <property type="entry name" value="2Fe-2S_ferredoxin-like_sf"/>
</dbReference>
<dbReference type="InterPro" id="IPR001041">
    <property type="entry name" value="2Fe-2S_ferredoxin-type"/>
</dbReference>
<dbReference type="InterPro" id="IPR006058">
    <property type="entry name" value="2Fe2S_fd_BS"/>
</dbReference>
<dbReference type="InterPro" id="IPR017896">
    <property type="entry name" value="4Fe4S_Fe-S-bd"/>
</dbReference>
<dbReference type="InterPro" id="IPR017900">
    <property type="entry name" value="4Fe4S_Fe_S_CS"/>
</dbReference>
<dbReference type="InterPro" id="IPR012675">
    <property type="entry name" value="Beta-grasp_dom_sf"/>
</dbReference>
<dbReference type="InterPro" id="IPR009051">
    <property type="entry name" value="Helical_ferredxn"/>
</dbReference>
<dbReference type="InterPro" id="IPR050573">
    <property type="entry name" value="SDH/FRD_Iron-Sulfur"/>
</dbReference>
<dbReference type="InterPro" id="IPR004489">
    <property type="entry name" value="Succ_DH/fum_Rdtase_Fe-S"/>
</dbReference>
<dbReference type="InterPro" id="IPR025192">
    <property type="entry name" value="Succ_DH/fum_Rdtase_N"/>
</dbReference>
<dbReference type="NCBIfam" id="TIGR00384">
    <property type="entry name" value="dhsB"/>
    <property type="match status" value="1"/>
</dbReference>
<dbReference type="NCBIfam" id="NF004616">
    <property type="entry name" value="PRK05950.1"/>
    <property type="match status" value="1"/>
</dbReference>
<dbReference type="PANTHER" id="PTHR11921:SF29">
    <property type="entry name" value="SUCCINATE DEHYDROGENASE [UBIQUINONE] IRON-SULFUR SUBUNIT, MITOCHONDRIAL"/>
    <property type="match status" value="1"/>
</dbReference>
<dbReference type="PANTHER" id="PTHR11921">
    <property type="entry name" value="SUCCINATE DEHYDROGENASE IRON-SULFUR PROTEIN"/>
    <property type="match status" value="1"/>
</dbReference>
<dbReference type="Pfam" id="PF13085">
    <property type="entry name" value="Fer2_3"/>
    <property type="match status" value="1"/>
</dbReference>
<dbReference type="Pfam" id="PF13534">
    <property type="entry name" value="Fer4_17"/>
    <property type="match status" value="1"/>
</dbReference>
<dbReference type="SUPFAM" id="SSF54292">
    <property type="entry name" value="2Fe-2S ferredoxin-like"/>
    <property type="match status" value="1"/>
</dbReference>
<dbReference type="SUPFAM" id="SSF46548">
    <property type="entry name" value="alpha-helical ferredoxin"/>
    <property type="match status" value="1"/>
</dbReference>
<dbReference type="PROSITE" id="PS00197">
    <property type="entry name" value="2FE2S_FER_1"/>
    <property type="match status" value="1"/>
</dbReference>
<dbReference type="PROSITE" id="PS51085">
    <property type="entry name" value="2FE2S_FER_2"/>
    <property type="match status" value="1"/>
</dbReference>
<dbReference type="PROSITE" id="PS00198">
    <property type="entry name" value="4FE4S_FER_1"/>
    <property type="match status" value="1"/>
</dbReference>
<dbReference type="PROSITE" id="PS51379">
    <property type="entry name" value="4FE4S_FER_2"/>
    <property type="match status" value="1"/>
</dbReference>
<proteinExistence type="inferred from homology"/>
<gene>
    <name type="primary">SDH2</name>
    <name type="synonym">SDHB</name>
</gene>
<reference key="1">
    <citation type="journal article" date="1996" name="Proc. Natl. Acad. Sci. U.S.A.">
        <title>Genes encoding the same three subunits of respiratory complex II are present in the mitochondrial DNA of two phylogenetically distant eukaryotes.</title>
        <authorList>
            <person name="Burger G."/>
            <person name="Lang B.F."/>
            <person name="Reith M."/>
            <person name="Gray M.W."/>
        </authorList>
    </citation>
    <scope>NUCLEOTIDE SEQUENCE [GENOMIC DNA]</scope>
    <source>
        <strain>ATCC 50394</strain>
    </source>
</reference>
<keyword id="KW-0001">2Fe-2S</keyword>
<keyword id="KW-0003">3Fe-4S</keyword>
<keyword id="KW-0004">4Fe-4S</keyword>
<keyword id="KW-0249">Electron transport</keyword>
<keyword id="KW-0408">Iron</keyword>
<keyword id="KW-0411">Iron-sulfur</keyword>
<keyword id="KW-0472">Membrane</keyword>
<keyword id="KW-0479">Metal-binding</keyword>
<keyword id="KW-0496">Mitochondrion</keyword>
<keyword id="KW-0999">Mitochondrion inner membrane</keyword>
<keyword id="KW-0560">Oxidoreductase</keyword>
<keyword id="KW-0813">Transport</keyword>
<keyword id="KW-0816">Tricarboxylic acid cycle</keyword>
<feature type="chain" id="PRO_0000158697" description="Succinate dehydrogenase [ubiquinone] iron-sulfur subunit">
    <location>
        <begin position="1"/>
        <end position="239"/>
    </location>
</feature>
<feature type="domain" description="2Fe-2S ferredoxin-type" evidence="2">
    <location>
        <begin position="11"/>
        <end position="100"/>
    </location>
</feature>
<feature type="domain" description="4Fe-4S ferredoxin-type" evidence="3">
    <location>
        <begin position="141"/>
        <end position="171"/>
    </location>
</feature>
<feature type="binding site" evidence="1">
    <location>
        <position position="61"/>
    </location>
    <ligand>
        <name>[2Fe-2S] cluster</name>
        <dbReference type="ChEBI" id="CHEBI:190135"/>
    </ligand>
</feature>
<feature type="binding site" evidence="1">
    <location>
        <position position="66"/>
    </location>
    <ligand>
        <name>[2Fe-2S] cluster</name>
        <dbReference type="ChEBI" id="CHEBI:190135"/>
    </ligand>
</feature>
<feature type="binding site" evidence="1">
    <location>
        <position position="69"/>
    </location>
    <ligand>
        <name>[2Fe-2S] cluster</name>
        <dbReference type="ChEBI" id="CHEBI:190135"/>
    </ligand>
</feature>
<feature type="binding site" evidence="1">
    <location>
        <position position="81"/>
    </location>
    <ligand>
        <name>[2Fe-2S] cluster</name>
        <dbReference type="ChEBI" id="CHEBI:190135"/>
    </ligand>
</feature>
<feature type="binding site" evidence="1">
    <location>
        <position position="151"/>
    </location>
    <ligand>
        <name>[4Fe-4S] cluster</name>
        <dbReference type="ChEBI" id="CHEBI:49883"/>
    </ligand>
</feature>
<feature type="binding site" evidence="1">
    <location>
        <position position="154"/>
    </location>
    <ligand>
        <name>[4Fe-4S] cluster</name>
        <dbReference type="ChEBI" id="CHEBI:49883"/>
    </ligand>
</feature>
<feature type="binding site" evidence="1">
    <location>
        <position position="157"/>
    </location>
    <ligand>
        <name>[4Fe-4S] cluster</name>
        <dbReference type="ChEBI" id="CHEBI:49883"/>
    </ligand>
</feature>
<feature type="binding site" evidence="1">
    <location>
        <position position="161"/>
    </location>
    <ligand>
        <name>[3Fe-4S] cluster</name>
        <dbReference type="ChEBI" id="CHEBI:21137"/>
    </ligand>
</feature>
<feature type="binding site" evidence="1">
    <location>
        <position position="166"/>
    </location>
    <ligand>
        <name>a ubiquinone</name>
        <dbReference type="ChEBI" id="CHEBI:16389"/>
        <note>ligand shared with DHSD</note>
    </ligand>
</feature>
<feature type="binding site" evidence="1">
    <location>
        <position position="208"/>
    </location>
    <ligand>
        <name>[3Fe-4S] cluster</name>
        <dbReference type="ChEBI" id="CHEBI:21137"/>
    </ligand>
</feature>
<feature type="binding site" evidence="1">
    <location>
        <position position="214"/>
    </location>
    <ligand>
        <name>[3Fe-4S] cluster</name>
        <dbReference type="ChEBI" id="CHEBI:21137"/>
    </ligand>
</feature>
<feature type="binding site" evidence="1">
    <location>
        <position position="218"/>
    </location>
    <ligand>
        <name>[4Fe-4S] cluster</name>
        <dbReference type="ChEBI" id="CHEBI:49883"/>
    </ligand>
</feature>
<geneLocation type="mitochondrion"/>
<organism>
    <name type="scientific">Reclinomonas americana</name>
    <dbReference type="NCBI Taxonomy" id="48483"/>
    <lineage>
        <taxon>Eukaryota</taxon>
        <taxon>Discoba</taxon>
        <taxon>Jakobida</taxon>
        <taxon>Histionina</taxon>
        <taxon>Histionidae</taxon>
        <taxon>Reclinomonas</taxon>
    </lineage>
</organism>
<sequence>MNTKKEKIMLFKVYRWNPDKKEKPHISTYSVDLNSCGPMVLDALIKIKNEQDSTLTFRRSCREGVCGSCAMNIDGTNTLACIKSIDTNKKEMKIYPLPHMHIIKDLVPDLSNFYAQYKSIEPWMKTTEKKLDKEFYQSRNDREKLDGLYECVLCACCSTSCPSYWWNSDKYLGPAVLLQAYRWIVDSRDQGTRERLQYLEDPFKLYRCHTILNCTKTCPKHLNPAQAIAKIKQNITLLT</sequence>
<name>SDHB_RECAM</name>
<comment type="function">
    <text evidence="1">Iron-sulfur protein (IP) subunit of succinate dehydrogenase (SDH) that is involved in complex II of the mitochondrial electron transport chain and is responsible for transferring electrons from succinate to ubiquinone (coenzyme Q).</text>
</comment>
<comment type="catalytic activity">
    <reaction>
        <text>a quinone + succinate = fumarate + a quinol</text>
        <dbReference type="Rhea" id="RHEA:40523"/>
        <dbReference type="ChEBI" id="CHEBI:24646"/>
        <dbReference type="ChEBI" id="CHEBI:29806"/>
        <dbReference type="ChEBI" id="CHEBI:30031"/>
        <dbReference type="ChEBI" id="CHEBI:132124"/>
        <dbReference type="EC" id="1.3.5.1"/>
    </reaction>
</comment>
<comment type="cofactor">
    <cofactor evidence="1">
        <name>[2Fe-2S] cluster</name>
        <dbReference type="ChEBI" id="CHEBI:190135"/>
    </cofactor>
    <text evidence="1">Binds 1 [2Fe-2S] cluster.</text>
</comment>
<comment type="cofactor">
    <cofactor evidence="1">
        <name>[3Fe-4S] cluster</name>
        <dbReference type="ChEBI" id="CHEBI:21137"/>
    </cofactor>
    <text evidence="1">Binds 1 [3Fe-4S] cluster.</text>
</comment>
<comment type="cofactor">
    <cofactor evidence="1">
        <name>[4Fe-4S] cluster</name>
        <dbReference type="ChEBI" id="CHEBI:49883"/>
    </cofactor>
    <text evidence="1">Binds 1 [4Fe-4S] cluster.</text>
</comment>
<comment type="pathway">
    <text>Carbohydrate metabolism; tricarboxylic acid cycle; fumarate from succinate (eukaryal route): step 1/1.</text>
</comment>
<comment type="subunit">
    <text evidence="1">Component of complex II composed of four subunits: a flavoprotein (FP), an iron-sulfur protein (IP), and a cytochrome b composed of a large and a small subunit.</text>
</comment>
<comment type="subcellular location">
    <subcellularLocation>
        <location evidence="1">Mitochondrion inner membrane</location>
        <topology evidence="1">Peripheral membrane protein</topology>
        <orientation evidence="1">Matrix side</orientation>
    </subcellularLocation>
</comment>
<comment type="similarity">
    <text evidence="4">Belongs to the succinate dehydrogenase/fumarate reductase iron-sulfur protein family.</text>
</comment>
<protein>
    <recommendedName>
        <fullName>Succinate dehydrogenase [ubiquinone] iron-sulfur subunit</fullName>
        <ecNumber>1.3.5.1</ecNumber>
    </recommendedName>
    <alternativeName>
        <fullName>Iron-sulfur subunit of complex II</fullName>
        <shortName>Ip</shortName>
    </alternativeName>
</protein>
<accession>P80480</accession>
<evidence type="ECO:0000250" key="1"/>
<evidence type="ECO:0000255" key="2">
    <source>
        <dbReference type="PROSITE-ProRule" id="PRU00465"/>
    </source>
</evidence>
<evidence type="ECO:0000255" key="3">
    <source>
        <dbReference type="PROSITE-ProRule" id="PRU00711"/>
    </source>
</evidence>
<evidence type="ECO:0000305" key="4"/>